<feature type="signal peptide" evidence="4">
    <location>
        <begin position="1"/>
        <end position="16"/>
    </location>
</feature>
<feature type="chain" id="PRO_0000022205" description="Renin receptor">
    <location>
        <begin position="17"/>
        <end position="350"/>
    </location>
</feature>
<feature type="chain" id="PRO_0000447868" description="Renin receptor extracellular fragment" evidence="5">
    <location>
        <begin position="17"/>
        <end position="275"/>
    </location>
</feature>
<feature type="chain" id="PRO_0000447869" description="Renin receptor cytoplasmic fragment" evidence="5">
    <location>
        <begin position="278"/>
        <end position="350"/>
    </location>
</feature>
<feature type="topological domain" description="Extracellular" evidence="4">
    <location>
        <begin position="17"/>
        <end position="302"/>
    </location>
</feature>
<feature type="transmembrane region" description="Helical" evidence="4">
    <location>
        <begin position="303"/>
        <end position="323"/>
    </location>
</feature>
<feature type="topological domain" description="Cytoplasmic" evidence="4">
    <location>
        <begin position="324"/>
        <end position="350"/>
    </location>
</feature>
<feature type="short sequence motif" description="Mediates retrograde transport to the ER" evidence="1">
    <location>
        <begin position="346"/>
        <end position="350"/>
    </location>
</feature>
<feature type="site" description="Cleavage; by furin-like protease" evidence="1">
    <location>
        <begin position="275"/>
        <end position="276"/>
    </location>
</feature>
<feature type="site" description="Cleavage; by furin-like protease" evidence="1">
    <location>
        <begin position="277"/>
        <end position="278"/>
    </location>
</feature>
<dbReference type="EMBL" id="CR861006">
    <property type="protein sequence ID" value="CAH93103.1"/>
    <property type="molecule type" value="mRNA"/>
</dbReference>
<dbReference type="RefSeq" id="NP_001126837.1">
    <property type="nucleotide sequence ID" value="NM_001133365.1"/>
</dbReference>
<dbReference type="SMR" id="Q5R563"/>
<dbReference type="FunCoup" id="Q5R563">
    <property type="interactions" value="1039"/>
</dbReference>
<dbReference type="STRING" id="9601.ENSPPYP00000022663"/>
<dbReference type="Ensembl" id="ENSPPYT00000023623.3">
    <property type="protein sequence ID" value="ENSPPYP00000022663.2"/>
    <property type="gene ID" value="ENSPPYG00000020251.3"/>
</dbReference>
<dbReference type="GeneID" id="100173844"/>
<dbReference type="KEGG" id="pon:100173844"/>
<dbReference type="CTD" id="10159"/>
<dbReference type="eggNOG" id="KOG4737">
    <property type="taxonomic scope" value="Eukaryota"/>
</dbReference>
<dbReference type="GeneTree" id="ENSGT00390000008856"/>
<dbReference type="HOGENOM" id="CLU_065819_0_0_1"/>
<dbReference type="InParanoid" id="Q5R563"/>
<dbReference type="OMA" id="QYAVIFN"/>
<dbReference type="OrthoDB" id="7866065at2759"/>
<dbReference type="TreeFam" id="TF106137"/>
<dbReference type="Proteomes" id="UP000001595">
    <property type="component" value="Chromosome X"/>
</dbReference>
<dbReference type="GO" id="GO:0000421">
    <property type="term" value="C:autophagosome membrane"/>
    <property type="evidence" value="ECO:0007669"/>
    <property type="project" value="UniProtKB-SubCell"/>
</dbReference>
<dbReference type="GO" id="GO:0030424">
    <property type="term" value="C:axon"/>
    <property type="evidence" value="ECO:0007669"/>
    <property type="project" value="UniProtKB-SubCell"/>
</dbReference>
<dbReference type="GO" id="GO:0030665">
    <property type="term" value="C:clathrin-coated vesicle membrane"/>
    <property type="evidence" value="ECO:0007669"/>
    <property type="project" value="UniProtKB-SubCell"/>
</dbReference>
<dbReference type="GO" id="GO:0032591">
    <property type="term" value="C:dendritic spine membrane"/>
    <property type="evidence" value="ECO:0007669"/>
    <property type="project" value="UniProtKB-SubCell"/>
</dbReference>
<dbReference type="GO" id="GO:0005789">
    <property type="term" value="C:endoplasmic reticulum membrane"/>
    <property type="evidence" value="ECO:0007669"/>
    <property type="project" value="UniProtKB-SubCell"/>
</dbReference>
<dbReference type="GO" id="GO:0010008">
    <property type="term" value="C:endosome membrane"/>
    <property type="evidence" value="ECO:0000250"/>
    <property type="project" value="UniProtKB"/>
</dbReference>
<dbReference type="GO" id="GO:0009897">
    <property type="term" value="C:external side of plasma membrane"/>
    <property type="evidence" value="ECO:0007669"/>
    <property type="project" value="Ensembl"/>
</dbReference>
<dbReference type="GO" id="GO:0005765">
    <property type="term" value="C:lysosomal membrane"/>
    <property type="evidence" value="ECO:0000250"/>
    <property type="project" value="UniProtKB"/>
</dbReference>
<dbReference type="GO" id="GO:0045211">
    <property type="term" value="C:postsynaptic membrane"/>
    <property type="evidence" value="ECO:0007669"/>
    <property type="project" value="UniProtKB-KW"/>
</dbReference>
<dbReference type="GO" id="GO:0030672">
    <property type="term" value="C:synaptic vesicle membrane"/>
    <property type="evidence" value="ECO:0007669"/>
    <property type="project" value="UniProtKB-SubCell"/>
</dbReference>
<dbReference type="GO" id="GO:0016471">
    <property type="term" value="C:vacuolar proton-transporting V-type ATPase complex"/>
    <property type="evidence" value="ECO:0000250"/>
    <property type="project" value="UniProtKB"/>
</dbReference>
<dbReference type="GO" id="GO:0000220">
    <property type="term" value="C:vacuolar proton-transporting V-type ATPase, V0 domain"/>
    <property type="evidence" value="ECO:0000250"/>
    <property type="project" value="UniProtKB"/>
</dbReference>
<dbReference type="GO" id="GO:0038023">
    <property type="term" value="F:signaling receptor activity"/>
    <property type="evidence" value="ECO:0007669"/>
    <property type="project" value="InterPro"/>
</dbReference>
<dbReference type="GO" id="GO:0002003">
    <property type="term" value="P:angiotensin maturation"/>
    <property type="evidence" value="ECO:0007669"/>
    <property type="project" value="Ensembl"/>
</dbReference>
<dbReference type="GO" id="GO:0021626">
    <property type="term" value="P:central nervous system maturation"/>
    <property type="evidence" value="ECO:0000250"/>
    <property type="project" value="UniProtKB"/>
</dbReference>
<dbReference type="GO" id="GO:0048069">
    <property type="term" value="P:eye pigmentation"/>
    <property type="evidence" value="ECO:0007669"/>
    <property type="project" value="Ensembl"/>
</dbReference>
<dbReference type="GO" id="GO:0060323">
    <property type="term" value="P:head morphogenesis"/>
    <property type="evidence" value="ECO:0007669"/>
    <property type="project" value="Ensembl"/>
</dbReference>
<dbReference type="GO" id="GO:0007042">
    <property type="term" value="P:lysosomal lumen acidification"/>
    <property type="evidence" value="ECO:0000250"/>
    <property type="project" value="UniProtKB"/>
</dbReference>
<dbReference type="GO" id="GO:0090263">
    <property type="term" value="P:positive regulation of canonical Wnt signaling pathway"/>
    <property type="evidence" value="ECO:0000250"/>
    <property type="project" value="UniProtKB"/>
</dbReference>
<dbReference type="GO" id="GO:0032914">
    <property type="term" value="P:positive regulation of transforming growth factor beta1 production"/>
    <property type="evidence" value="ECO:0007669"/>
    <property type="project" value="Ensembl"/>
</dbReference>
<dbReference type="GO" id="GO:0043408">
    <property type="term" value="P:regulation of MAPK cascade"/>
    <property type="evidence" value="ECO:0007669"/>
    <property type="project" value="Ensembl"/>
</dbReference>
<dbReference type="GO" id="GO:0021903">
    <property type="term" value="P:rostrocaudal neural tube patterning"/>
    <property type="evidence" value="ECO:0007669"/>
    <property type="project" value="Ensembl"/>
</dbReference>
<dbReference type="InterPro" id="IPR056780">
    <property type="entry name" value="Renin_r_C"/>
</dbReference>
<dbReference type="InterPro" id="IPR012493">
    <property type="entry name" value="Renin_rcpt"/>
</dbReference>
<dbReference type="PANTHER" id="PTHR13351">
    <property type="entry name" value="RENIN RECEPTOR"/>
    <property type="match status" value="1"/>
</dbReference>
<dbReference type="PANTHER" id="PTHR13351:SF5">
    <property type="entry name" value="RENIN RECEPTOR"/>
    <property type="match status" value="1"/>
</dbReference>
<dbReference type="Pfam" id="PF07850">
    <property type="entry name" value="Renin_r"/>
    <property type="match status" value="1"/>
</dbReference>
<dbReference type="Pfam" id="PF25294">
    <property type="entry name" value="RENR_N"/>
    <property type="match status" value="1"/>
</dbReference>
<organism>
    <name type="scientific">Pongo abelii</name>
    <name type="common">Sumatran orangutan</name>
    <name type="synonym">Pongo pygmaeus abelii</name>
    <dbReference type="NCBI Taxonomy" id="9601"/>
    <lineage>
        <taxon>Eukaryota</taxon>
        <taxon>Metazoa</taxon>
        <taxon>Chordata</taxon>
        <taxon>Craniata</taxon>
        <taxon>Vertebrata</taxon>
        <taxon>Euteleostomi</taxon>
        <taxon>Mammalia</taxon>
        <taxon>Eutheria</taxon>
        <taxon>Euarchontoglires</taxon>
        <taxon>Primates</taxon>
        <taxon>Haplorrhini</taxon>
        <taxon>Catarrhini</taxon>
        <taxon>Hominidae</taxon>
        <taxon>Pongo</taxon>
    </lineage>
</organism>
<reference key="1">
    <citation type="submission" date="2004-11" db="EMBL/GenBank/DDBJ databases">
        <authorList>
            <consortium name="The German cDNA consortium"/>
        </authorList>
    </citation>
    <scope>NUCLEOTIDE SEQUENCE [LARGE SCALE MRNA]</scope>
    <source>
        <tissue>Brain cortex</tissue>
    </source>
</reference>
<name>RENR_PONAB</name>
<evidence type="ECO:0000250" key="1">
    <source>
        <dbReference type="UniProtKB" id="O75787"/>
    </source>
</evidence>
<evidence type="ECO:0000250" key="2">
    <source>
        <dbReference type="UniProtKB" id="Q6AXS4"/>
    </source>
</evidence>
<evidence type="ECO:0000250" key="3">
    <source>
        <dbReference type="UniProtKB" id="Q9CYN9"/>
    </source>
</evidence>
<evidence type="ECO:0000255" key="4"/>
<evidence type="ECO:0000305" key="5"/>
<comment type="function">
    <text evidence="1 3">Multifunctional protein which functions as a renin, prorenin cellular receptor and is involved in the assembly of the lysosomal proton-transporting V-type ATPase (V-ATPase) and the acidification of the endo-lysosomal system. May mediate renin-dependent cellular responses by activating ERK1 and ERK2. By increasing the catalytic efficiency of renin in AGT/angiotensinogen conversion to angiotensin I, may also play a role in the renin-angiotensin system (RAS) (By similarity). Through its function in V-type ATPase (v-ATPase) assembly and acidification of the lysosome it regulates protein degradation and may control different signaling pathways important for proper brain development, synapse morphology and synaptic transmission (By similarity).</text>
</comment>
<comment type="subunit">
    <text evidence="1">Interacts with renin. Accessory component of the multisubunit proton-transporting vacuolar (V)-ATPase protein pump. Interacts (via N-terminus) with ATP6AP1 (via N-terminus). Interacts with ATP6V0D1; ATP6V0D1 is a V-ATPase complex subunit and the interaction promotes V-ATPase complex assembly. Interacts with TMEM9; TMEM9 is a V-ATPase assembly regulator and the interaction induces the interaction with ATP6V0D1. Interacts with VMA21 (via N-terminus); VMA21 is a V-ATPase accessory component.</text>
</comment>
<comment type="subcellular location">
    <subcellularLocation>
        <location evidence="1">Endoplasmic reticulum membrane</location>
        <topology evidence="1">Single-pass type I membrane protein</topology>
    </subcellularLocation>
    <subcellularLocation>
        <location evidence="1">Lysosome membrane</location>
        <topology evidence="1">Single-pass type I membrane protein</topology>
    </subcellularLocation>
    <subcellularLocation>
        <location evidence="3">Cytoplasmic vesicle</location>
        <location evidence="3">Autophagosome membrane</location>
        <topology evidence="1">Single-pass type I membrane protein</topology>
    </subcellularLocation>
    <subcellularLocation>
        <location evidence="3">Cell projection</location>
        <location evidence="3">Dendritic spine membrane</location>
        <topology evidence="1">Single-pass type I membrane protein</topology>
    </subcellularLocation>
    <subcellularLocation>
        <location evidence="3">Cell projection</location>
        <location evidence="3">Axon</location>
    </subcellularLocation>
    <subcellularLocation>
        <location evidence="3">Endosome membrane</location>
        <topology evidence="1">Single-pass type I membrane protein</topology>
    </subcellularLocation>
    <subcellularLocation>
        <location evidence="2">Cytoplasmic vesicle</location>
        <location evidence="2">Clathrin-coated vesicle membrane</location>
        <topology evidence="1">Single-pass type I membrane protein</topology>
    </subcellularLocation>
    <subcellularLocation>
        <location evidence="2">Cytoplasmic vesicle</location>
        <location evidence="2">Secretory vesicle</location>
        <location evidence="2">Synaptic vesicle membrane</location>
        <topology evidence="1">Single-pass type I membrane protein</topology>
    </subcellularLocation>
</comment>
<comment type="PTM">
    <text evidence="1">Phosphorylated.</text>
</comment>
<comment type="PTM">
    <text evidence="1">Proteolytically cleaved by a furin-like convertase in the trans-Golgi network to generate N- and C-terminal fragments.</text>
</comment>
<sequence length="350" mass="39008">MAVFVVLLALVAGVLGNEFSILKSPGSVVFRNGNWPIPGERIPDVAALSMGFSVKEDLSWPGLAVGNLFHRPRATVMVMVKGVNKLALPPGSVISYPLENAVPFSLDSVANSIHSLFSEETPVVLQLAPSEERVYMVGKANSVFEDLSVTLRQLRNRLFQENSVLSSLPLNSLSRNNEVDLLFLSELQVLHDISSLLSRHKHLAKDHSPDLYSLELAGLDEIGKRYGEDSEQFRDASKILVDALQKFADDMYSLYGGNAVVELVTVKSFDTSLIRKTRTILEAKQAKNPASPYNLAYKYNFEYSVVFNMVLWIMIALALAVIITSYNIWNMDPGYDSIIYRMTNQKIRMD</sequence>
<gene>
    <name type="primary">ATP6AP2</name>
    <name type="synonym">ATP6IP2</name>
</gene>
<protein>
    <recommendedName>
        <fullName>Renin receptor</fullName>
    </recommendedName>
    <alternativeName>
        <fullName>ATPase H(+)-transporting lysosomal accessory protein 2</fullName>
    </alternativeName>
    <alternativeName>
        <fullName>ATPase H(+)-transporting lysosomal-interacting protein 2</fullName>
    </alternativeName>
    <alternativeName>
        <fullName>Renin/prorenin receptor</fullName>
    </alternativeName>
    <component>
        <recommendedName>
            <fullName evidence="5">Renin receptor extracellular fragment</fullName>
        </recommendedName>
    </component>
    <component>
        <recommendedName>
            <fullName evidence="5">Renin receptor cytoplasmic fragment</fullName>
        </recommendedName>
    </component>
</protein>
<accession>Q5R563</accession>
<keyword id="KW-1003">Cell membrane</keyword>
<keyword id="KW-0966">Cell projection</keyword>
<keyword id="KW-0165">Cleavage on pair of basic residues</keyword>
<keyword id="KW-0968">Cytoplasmic vesicle</keyword>
<keyword id="KW-0256">Endoplasmic reticulum</keyword>
<keyword id="KW-0967">Endosome</keyword>
<keyword id="KW-0458">Lysosome</keyword>
<keyword id="KW-0472">Membrane</keyword>
<keyword id="KW-0597">Phosphoprotein</keyword>
<keyword id="KW-0628">Postsynaptic cell membrane</keyword>
<keyword id="KW-0675">Receptor</keyword>
<keyword id="KW-1185">Reference proteome</keyword>
<keyword id="KW-0732">Signal</keyword>
<keyword id="KW-0770">Synapse</keyword>
<keyword id="KW-0812">Transmembrane</keyword>
<keyword id="KW-1133">Transmembrane helix</keyword>
<proteinExistence type="evidence at transcript level"/>